<dbReference type="EC" id="4.3.3.6" evidence="1"/>
<dbReference type="EC" id="3.5.1.2" evidence="1"/>
<dbReference type="EMBL" id="CR936257">
    <property type="protein sequence ID" value="CAI48323.1"/>
    <property type="molecule type" value="Genomic_DNA"/>
</dbReference>
<dbReference type="RefSeq" id="WP_011321959.1">
    <property type="nucleotide sequence ID" value="NC_007426.1"/>
</dbReference>
<dbReference type="SMR" id="Q3IU60"/>
<dbReference type="STRING" id="348780.NP_0464A"/>
<dbReference type="EnsemblBacteria" id="CAI48323">
    <property type="protein sequence ID" value="CAI48323"/>
    <property type="gene ID" value="NP_0464A"/>
</dbReference>
<dbReference type="GeneID" id="3700865"/>
<dbReference type="KEGG" id="nph:NP_0464A"/>
<dbReference type="eggNOG" id="arCOG00034">
    <property type="taxonomic scope" value="Archaea"/>
</dbReference>
<dbReference type="HOGENOM" id="CLU_069674_2_0_2"/>
<dbReference type="OrthoDB" id="26717at2157"/>
<dbReference type="UniPathway" id="UPA00245"/>
<dbReference type="Proteomes" id="UP000002698">
    <property type="component" value="Chromosome"/>
</dbReference>
<dbReference type="GO" id="GO:0005829">
    <property type="term" value="C:cytosol"/>
    <property type="evidence" value="ECO:0007669"/>
    <property type="project" value="TreeGrafter"/>
</dbReference>
<dbReference type="GO" id="GO:1903600">
    <property type="term" value="C:glutaminase complex"/>
    <property type="evidence" value="ECO:0007669"/>
    <property type="project" value="TreeGrafter"/>
</dbReference>
<dbReference type="GO" id="GO:0004359">
    <property type="term" value="F:glutaminase activity"/>
    <property type="evidence" value="ECO:0007669"/>
    <property type="project" value="UniProtKB-UniRule"/>
</dbReference>
<dbReference type="GO" id="GO:0036381">
    <property type="term" value="F:pyridoxal 5'-phosphate synthase (glutamine hydrolysing) activity"/>
    <property type="evidence" value="ECO:0007669"/>
    <property type="project" value="UniProtKB-UniRule"/>
</dbReference>
<dbReference type="GO" id="GO:0006543">
    <property type="term" value="P:glutamine catabolic process"/>
    <property type="evidence" value="ECO:0007669"/>
    <property type="project" value="UniProtKB-UniRule"/>
</dbReference>
<dbReference type="GO" id="GO:0042823">
    <property type="term" value="P:pyridoxal phosphate biosynthetic process"/>
    <property type="evidence" value="ECO:0007669"/>
    <property type="project" value="UniProtKB-UniRule"/>
</dbReference>
<dbReference type="GO" id="GO:0008614">
    <property type="term" value="P:pyridoxine metabolic process"/>
    <property type="evidence" value="ECO:0007669"/>
    <property type="project" value="TreeGrafter"/>
</dbReference>
<dbReference type="CDD" id="cd01749">
    <property type="entry name" value="GATase1_PB"/>
    <property type="match status" value="1"/>
</dbReference>
<dbReference type="FunFam" id="3.40.50.880:FF:000010">
    <property type="entry name" value="uncharacterized protein LOC100176842 isoform X2"/>
    <property type="match status" value="1"/>
</dbReference>
<dbReference type="Gene3D" id="3.40.50.880">
    <property type="match status" value="1"/>
</dbReference>
<dbReference type="HAMAP" id="MF_01615">
    <property type="entry name" value="PdxT"/>
    <property type="match status" value="1"/>
</dbReference>
<dbReference type="InterPro" id="IPR029062">
    <property type="entry name" value="Class_I_gatase-like"/>
</dbReference>
<dbReference type="InterPro" id="IPR002161">
    <property type="entry name" value="PdxT/SNO"/>
</dbReference>
<dbReference type="NCBIfam" id="TIGR03800">
    <property type="entry name" value="PLP_synth_Pdx2"/>
    <property type="match status" value="1"/>
</dbReference>
<dbReference type="PANTHER" id="PTHR31559">
    <property type="entry name" value="PYRIDOXAL 5'-PHOSPHATE SYNTHASE SUBUNIT SNO"/>
    <property type="match status" value="1"/>
</dbReference>
<dbReference type="PANTHER" id="PTHR31559:SF0">
    <property type="entry name" value="PYRIDOXAL 5'-PHOSPHATE SYNTHASE SUBUNIT SNO1-RELATED"/>
    <property type="match status" value="1"/>
</dbReference>
<dbReference type="Pfam" id="PF01174">
    <property type="entry name" value="SNO"/>
    <property type="match status" value="1"/>
</dbReference>
<dbReference type="PIRSF" id="PIRSF005639">
    <property type="entry name" value="Glut_amidoT_SNO"/>
    <property type="match status" value="1"/>
</dbReference>
<dbReference type="SUPFAM" id="SSF52317">
    <property type="entry name" value="Class I glutamine amidotransferase-like"/>
    <property type="match status" value="1"/>
</dbReference>
<dbReference type="PROSITE" id="PS51130">
    <property type="entry name" value="PDXT_SNO_2"/>
    <property type="match status" value="1"/>
</dbReference>
<comment type="function">
    <text evidence="1">Catalyzes the hydrolysis of glutamine to glutamate and ammonia as part of the biosynthesis of pyridoxal 5'-phosphate. The resulting ammonia molecule is channeled to the active site of PdxS.</text>
</comment>
<comment type="catalytic activity">
    <reaction evidence="1">
        <text>aldehydo-D-ribose 5-phosphate + D-glyceraldehyde 3-phosphate + L-glutamine = pyridoxal 5'-phosphate + L-glutamate + phosphate + 3 H2O + H(+)</text>
        <dbReference type="Rhea" id="RHEA:31507"/>
        <dbReference type="ChEBI" id="CHEBI:15377"/>
        <dbReference type="ChEBI" id="CHEBI:15378"/>
        <dbReference type="ChEBI" id="CHEBI:29985"/>
        <dbReference type="ChEBI" id="CHEBI:43474"/>
        <dbReference type="ChEBI" id="CHEBI:58273"/>
        <dbReference type="ChEBI" id="CHEBI:58359"/>
        <dbReference type="ChEBI" id="CHEBI:59776"/>
        <dbReference type="ChEBI" id="CHEBI:597326"/>
        <dbReference type="EC" id="4.3.3.6"/>
    </reaction>
</comment>
<comment type="catalytic activity">
    <reaction evidence="1">
        <text>L-glutamine + H2O = L-glutamate + NH4(+)</text>
        <dbReference type="Rhea" id="RHEA:15889"/>
        <dbReference type="ChEBI" id="CHEBI:15377"/>
        <dbReference type="ChEBI" id="CHEBI:28938"/>
        <dbReference type="ChEBI" id="CHEBI:29985"/>
        <dbReference type="ChEBI" id="CHEBI:58359"/>
        <dbReference type="EC" id="3.5.1.2"/>
    </reaction>
</comment>
<comment type="pathway">
    <text evidence="1">Cofactor biosynthesis; pyridoxal 5'-phosphate biosynthesis.</text>
</comment>
<comment type="subunit">
    <text evidence="1">In the presence of PdxS, forms a dodecamer of heterodimers. Only shows activity in the heterodimer.</text>
</comment>
<comment type="similarity">
    <text evidence="1">Belongs to the glutaminase PdxT/SNO family.</text>
</comment>
<evidence type="ECO:0000255" key="1">
    <source>
        <dbReference type="HAMAP-Rule" id="MF_01615"/>
    </source>
</evidence>
<feature type="chain" id="PRO_0000255824" description="Pyridoxal 5'-phosphate synthase subunit PdxT">
    <location>
        <begin position="1"/>
        <end position="192"/>
    </location>
</feature>
<feature type="active site" description="Nucleophile" evidence="1">
    <location>
        <position position="85"/>
    </location>
</feature>
<feature type="active site" description="Charge relay system" evidence="1">
    <location>
        <position position="176"/>
    </location>
</feature>
<feature type="active site" description="Charge relay system" evidence="1">
    <location>
        <position position="178"/>
    </location>
</feature>
<feature type="binding site" evidence="1">
    <location>
        <begin position="53"/>
        <end position="55"/>
    </location>
    <ligand>
        <name>L-glutamine</name>
        <dbReference type="ChEBI" id="CHEBI:58359"/>
    </ligand>
</feature>
<feature type="binding site" evidence="1">
    <location>
        <position position="112"/>
    </location>
    <ligand>
        <name>L-glutamine</name>
        <dbReference type="ChEBI" id="CHEBI:58359"/>
    </ligand>
</feature>
<feature type="binding site" evidence="1">
    <location>
        <begin position="140"/>
        <end position="141"/>
    </location>
    <ligand>
        <name>L-glutamine</name>
        <dbReference type="ChEBI" id="CHEBI:58359"/>
    </ligand>
</feature>
<name>PDXT_NATPD</name>
<reference key="1">
    <citation type="journal article" date="2005" name="Genome Res.">
        <title>Living with two extremes: conclusions from the genome sequence of Natronomonas pharaonis.</title>
        <authorList>
            <person name="Falb M."/>
            <person name="Pfeiffer F."/>
            <person name="Palm P."/>
            <person name="Rodewald K."/>
            <person name="Hickmann V."/>
            <person name="Tittor J."/>
            <person name="Oesterhelt D."/>
        </authorList>
    </citation>
    <scope>NUCLEOTIDE SEQUENCE [LARGE SCALE GENOMIC DNA]</scope>
    <source>
        <strain>ATCC 35678 / DSM 2160 / CIP 103997 / JCM 8858 / NBRC 14720 / NCIMB 2260 / Gabara</strain>
    </source>
</reference>
<organism>
    <name type="scientific">Natronomonas pharaonis (strain ATCC 35678 / DSM 2160 / CIP 103997 / JCM 8858 / NBRC 14720 / NCIMB 2260 / Gabara)</name>
    <name type="common">Halobacterium pharaonis</name>
    <dbReference type="NCBI Taxonomy" id="348780"/>
    <lineage>
        <taxon>Archaea</taxon>
        <taxon>Methanobacteriati</taxon>
        <taxon>Methanobacteriota</taxon>
        <taxon>Stenosarchaea group</taxon>
        <taxon>Halobacteria</taxon>
        <taxon>Halobacteriales</taxon>
        <taxon>Haloarculaceae</taxon>
        <taxon>Natronomonas</taxon>
    </lineage>
</organism>
<protein>
    <recommendedName>
        <fullName evidence="1">Pyridoxal 5'-phosphate synthase subunit PdxT</fullName>
        <ecNumber evidence="1">4.3.3.6</ecNumber>
    </recommendedName>
    <alternativeName>
        <fullName evidence="1">Pdx2</fullName>
    </alternativeName>
    <alternativeName>
        <fullName evidence="1">Pyridoxal 5'-phosphate synthase glutaminase subunit</fullName>
        <ecNumber evidence="1">3.5.1.2</ecNumber>
    </alternativeName>
</protein>
<proteinExistence type="inferred from homology"/>
<keyword id="KW-0315">Glutamine amidotransferase</keyword>
<keyword id="KW-0378">Hydrolase</keyword>
<keyword id="KW-0456">Lyase</keyword>
<keyword id="KW-0663">Pyridoxal phosphate</keyword>
<keyword id="KW-1185">Reference proteome</keyword>
<gene>
    <name evidence="1" type="primary">pdxT</name>
    <name type="ordered locus">NP_0464A</name>
</gene>
<accession>Q3IU60</accession>
<sequence>MLKAGVIAVQGDVAEHADAIRRAADRHGEDCTVESIRSAGVVPECDLLLLPGGESTTISRLLAEEGIDEEIEAFAAAGKPLLATCAGLIVASRDAKDDRVSTLDILDVSVDRNAFGRQKDSFEAAIDVEGLDEPFPAVFIRAPLIDEVDAAVETLAAVDDRPVAVRQDNVVGTSFHPELTDDSRIHGLAFFS</sequence>